<name>MPS1_DICDI</name>
<sequence length="983" mass="113573">MDTHQSFNENQHPNFNSGNHGGINMNRFQRFSKPTISPIQQQQQPQPQQPSSIIQRQSIIMTQPQPQPQPQMIPIFREPNEWYKLIDMEMNKFNNESRPSPEYIKYLTQLFQQALDSLEHKNTPEFYLFLLNRATFQSKIGENEDAKGTLKYMKVLKMESFEVFVLLSEIESKSFRFSKARSIINRGIQKIPSRSKEFEGFLMVIDIQEDEFSRNGCIISNNNNISFNNGDVNNNSIIMNENDQPMVINLNPQQQQQQQQQPYEISSSSSLMSTPASSRHLSNRSSIVPTPNSSTKLSESIKTIGLRSVQPRRVIHKQTTTNFNTTTTTIPENSYDDDADQPMDHDGNNNNNFRIHSNNNNNSSANSSYNKSENDEDDQDEEDEEEEDEDEDDDEEDEEEYEDNNNNNNNNNNNNNNNNNNNNNNNNNNYFKYNRQQYILNNDSDTSTNPNSPASSNSSVNDIINSISITDDSKLDYENNVKLQQQQQQQQQQQQQQQQQQQQQQQQQYIQQQQQQQPKIHPQRFSLQNNTPTTTTTTTAATNVQNPSSSSSYISPPLSSQSSELQHQRRHSIQAQRANKPPVIPPPSKLHQNNLQQQQQQQQQQQQQQQQQQQQQLLLQQQALLQQQQQQQILLQQQQQQQQQQQQQQQQQKQQEQQLKKTNMQPPPPKQPQPQTQTQQQQKNINNSEIVDKEKSFEVAKSWSEVAMVNGKPYLRIEFIGKGGSGKVYKVLSGDLKIYALKYVCLSDPNEIEAQLNEIEMLKRLRKQVNIIQLIDYEVNMAKNYILLVLEFGEIDLSKLLQRLQTPNGTNVNFIRIYWQQMLQAVHTIHEEKIIHGDLKPANFVSVQGSLKLIDFGIAKAIQSDDTTNIVRESQIGTINYISPEALIDTSQGGPKQCMKLGRASDIWSLGCILYEMAFGYPPFKSFSNIISKYQAIINPHHKIEFPVHPNENLLKVLKLCLIRNPHERPTIPTLLNHDFLKI</sequence>
<proteinExistence type="inferred from homology"/>
<feature type="chain" id="PRO_0000362023" description="Probable serine/threonine-protein kinase mps1">
    <location>
        <begin position="1"/>
        <end position="983"/>
    </location>
</feature>
<feature type="domain" description="Protein kinase" evidence="2">
    <location>
        <begin position="714"/>
        <end position="981"/>
    </location>
</feature>
<feature type="region of interest" description="Disordered" evidence="3">
    <location>
        <begin position="1"/>
        <end position="26"/>
    </location>
</feature>
<feature type="region of interest" description="Disordered" evidence="3">
    <location>
        <begin position="252"/>
        <end position="430"/>
    </location>
</feature>
<feature type="region of interest" description="Disordered" evidence="3">
    <location>
        <begin position="441"/>
        <end position="460"/>
    </location>
</feature>
<feature type="region of interest" description="Disordered" evidence="3">
    <location>
        <begin position="513"/>
        <end position="601"/>
    </location>
</feature>
<feature type="region of interest" description="Disordered" evidence="3">
    <location>
        <begin position="654"/>
        <end position="691"/>
    </location>
</feature>
<feature type="coiled-coil region" evidence="1">
    <location>
        <begin position="380"/>
        <end position="430"/>
    </location>
</feature>
<feature type="coiled-coil region" evidence="1">
    <location>
        <begin position="474"/>
        <end position="517"/>
    </location>
</feature>
<feature type="coiled-coil region" evidence="1">
    <location>
        <begin position="588"/>
        <end position="665"/>
    </location>
</feature>
<feature type="compositionally biased region" description="Polar residues" evidence="3">
    <location>
        <begin position="1"/>
        <end position="18"/>
    </location>
</feature>
<feature type="compositionally biased region" description="Low complexity" evidence="3">
    <location>
        <begin position="253"/>
        <end position="278"/>
    </location>
</feature>
<feature type="compositionally biased region" description="Polar residues" evidence="3">
    <location>
        <begin position="279"/>
        <end position="301"/>
    </location>
</feature>
<feature type="compositionally biased region" description="Low complexity" evidence="3">
    <location>
        <begin position="319"/>
        <end position="329"/>
    </location>
</feature>
<feature type="compositionally biased region" description="Low complexity" evidence="3">
    <location>
        <begin position="348"/>
        <end position="371"/>
    </location>
</feature>
<feature type="compositionally biased region" description="Acidic residues" evidence="3">
    <location>
        <begin position="374"/>
        <end position="403"/>
    </location>
</feature>
<feature type="compositionally biased region" description="Low complexity" evidence="3">
    <location>
        <begin position="404"/>
        <end position="429"/>
    </location>
</feature>
<feature type="compositionally biased region" description="Low complexity" evidence="3">
    <location>
        <begin position="529"/>
        <end position="563"/>
    </location>
</feature>
<feature type="compositionally biased region" description="Low complexity" evidence="3">
    <location>
        <begin position="673"/>
        <end position="683"/>
    </location>
</feature>
<feature type="active site" description="Proton acceptor" evidence="2">
    <location>
        <position position="838"/>
    </location>
</feature>
<feature type="binding site" evidence="2">
    <location>
        <begin position="720"/>
        <end position="728"/>
    </location>
    <ligand>
        <name>ATP</name>
        <dbReference type="ChEBI" id="CHEBI:30616"/>
    </ligand>
</feature>
<feature type="binding site" evidence="2">
    <location>
        <position position="742"/>
    </location>
    <ligand>
        <name>ATP</name>
        <dbReference type="ChEBI" id="CHEBI:30616"/>
    </ligand>
</feature>
<evidence type="ECO:0000255" key="1"/>
<evidence type="ECO:0000255" key="2">
    <source>
        <dbReference type="PROSITE-ProRule" id="PRU00159"/>
    </source>
</evidence>
<evidence type="ECO:0000256" key="3">
    <source>
        <dbReference type="SAM" id="MobiDB-lite"/>
    </source>
</evidence>
<comment type="catalytic activity">
    <reaction>
        <text>L-seryl-[protein] + ATP = O-phospho-L-seryl-[protein] + ADP + H(+)</text>
        <dbReference type="Rhea" id="RHEA:17989"/>
        <dbReference type="Rhea" id="RHEA-COMP:9863"/>
        <dbReference type="Rhea" id="RHEA-COMP:11604"/>
        <dbReference type="ChEBI" id="CHEBI:15378"/>
        <dbReference type="ChEBI" id="CHEBI:29999"/>
        <dbReference type="ChEBI" id="CHEBI:30616"/>
        <dbReference type="ChEBI" id="CHEBI:83421"/>
        <dbReference type="ChEBI" id="CHEBI:456216"/>
        <dbReference type="EC" id="2.7.11.1"/>
    </reaction>
</comment>
<comment type="catalytic activity">
    <reaction>
        <text>L-threonyl-[protein] + ATP = O-phospho-L-threonyl-[protein] + ADP + H(+)</text>
        <dbReference type="Rhea" id="RHEA:46608"/>
        <dbReference type="Rhea" id="RHEA-COMP:11060"/>
        <dbReference type="Rhea" id="RHEA-COMP:11605"/>
        <dbReference type="ChEBI" id="CHEBI:15378"/>
        <dbReference type="ChEBI" id="CHEBI:30013"/>
        <dbReference type="ChEBI" id="CHEBI:30616"/>
        <dbReference type="ChEBI" id="CHEBI:61977"/>
        <dbReference type="ChEBI" id="CHEBI:456216"/>
        <dbReference type="EC" id="2.7.11.1"/>
    </reaction>
</comment>
<comment type="similarity">
    <text evidence="2">Belongs to the protein kinase superfamily. Ser/Thr protein kinase family.</text>
</comment>
<protein>
    <recommendedName>
        <fullName>Probable serine/threonine-protein kinase mps1</fullName>
        <ecNumber>2.7.11.1</ecNumber>
    </recommendedName>
    <alternativeName>
        <fullName>Monopolar spindle protein 1</fullName>
    </alternativeName>
</protein>
<reference key="1">
    <citation type="journal article" date="2005" name="Nature">
        <title>The genome of the social amoeba Dictyostelium discoideum.</title>
        <authorList>
            <person name="Eichinger L."/>
            <person name="Pachebat J.A."/>
            <person name="Gloeckner G."/>
            <person name="Rajandream M.A."/>
            <person name="Sucgang R."/>
            <person name="Berriman M."/>
            <person name="Song J."/>
            <person name="Olsen R."/>
            <person name="Szafranski K."/>
            <person name="Xu Q."/>
            <person name="Tunggal B."/>
            <person name="Kummerfeld S."/>
            <person name="Madera M."/>
            <person name="Konfortov B.A."/>
            <person name="Rivero F."/>
            <person name="Bankier A.T."/>
            <person name="Lehmann R."/>
            <person name="Hamlin N."/>
            <person name="Davies R."/>
            <person name="Gaudet P."/>
            <person name="Fey P."/>
            <person name="Pilcher K."/>
            <person name="Chen G."/>
            <person name="Saunders D."/>
            <person name="Sodergren E.J."/>
            <person name="Davis P."/>
            <person name="Kerhornou A."/>
            <person name="Nie X."/>
            <person name="Hall N."/>
            <person name="Anjard C."/>
            <person name="Hemphill L."/>
            <person name="Bason N."/>
            <person name="Farbrother P."/>
            <person name="Desany B."/>
            <person name="Just E."/>
            <person name="Morio T."/>
            <person name="Rost R."/>
            <person name="Churcher C.M."/>
            <person name="Cooper J."/>
            <person name="Haydock S."/>
            <person name="van Driessche N."/>
            <person name="Cronin A."/>
            <person name="Goodhead I."/>
            <person name="Muzny D.M."/>
            <person name="Mourier T."/>
            <person name="Pain A."/>
            <person name="Lu M."/>
            <person name="Harper D."/>
            <person name="Lindsay R."/>
            <person name="Hauser H."/>
            <person name="James K.D."/>
            <person name="Quiles M."/>
            <person name="Madan Babu M."/>
            <person name="Saito T."/>
            <person name="Buchrieser C."/>
            <person name="Wardroper A."/>
            <person name="Felder M."/>
            <person name="Thangavelu M."/>
            <person name="Johnson D."/>
            <person name="Knights A."/>
            <person name="Loulseged H."/>
            <person name="Mungall K.L."/>
            <person name="Oliver K."/>
            <person name="Price C."/>
            <person name="Quail M.A."/>
            <person name="Urushihara H."/>
            <person name="Hernandez J."/>
            <person name="Rabbinowitsch E."/>
            <person name="Steffen D."/>
            <person name="Sanders M."/>
            <person name="Ma J."/>
            <person name="Kohara Y."/>
            <person name="Sharp S."/>
            <person name="Simmonds M.N."/>
            <person name="Spiegler S."/>
            <person name="Tivey A."/>
            <person name="Sugano S."/>
            <person name="White B."/>
            <person name="Walker D."/>
            <person name="Woodward J.R."/>
            <person name="Winckler T."/>
            <person name="Tanaka Y."/>
            <person name="Shaulsky G."/>
            <person name="Schleicher M."/>
            <person name="Weinstock G.M."/>
            <person name="Rosenthal A."/>
            <person name="Cox E.C."/>
            <person name="Chisholm R.L."/>
            <person name="Gibbs R.A."/>
            <person name="Loomis W.F."/>
            <person name="Platzer M."/>
            <person name="Kay R.R."/>
            <person name="Williams J.G."/>
            <person name="Dear P.H."/>
            <person name="Noegel A.A."/>
            <person name="Barrell B.G."/>
            <person name="Kuspa A."/>
        </authorList>
    </citation>
    <scope>NUCLEOTIDE SEQUENCE [LARGE SCALE GENOMIC DNA]</scope>
    <source>
        <strain>AX4</strain>
    </source>
</reference>
<reference key="2">
    <citation type="journal article" date="2004" name="Int. Rev. Cytol.">
        <title>Molecular and functional analysis of the dictyostelium centrosome.</title>
        <authorList>
            <person name="Graef R."/>
            <person name="Daunderer C."/>
            <person name="Schulz I."/>
        </authorList>
    </citation>
    <scope>IDENTIFICATION</scope>
</reference>
<keyword id="KW-0067">ATP-binding</keyword>
<keyword id="KW-0175">Coiled coil</keyword>
<keyword id="KW-0418">Kinase</keyword>
<keyword id="KW-0547">Nucleotide-binding</keyword>
<keyword id="KW-1185">Reference proteome</keyword>
<keyword id="KW-0723">Serine/threonine-protein kinase</keyword>
<keyword id="KW-0808">Transferase</keyword>
<dbReference type="EC" id="2.7.11.1"/>
<dbReference type="EMBL" id="AAFI02000040">
    <property type="protein sequence ID" value="EAL66794.1"/>
    <property type="molecule type" value="Genomic_DNA"/>
</dbReference>
<dbReference type="RefSeq" id="XP_640758.1">
    <property type="nucleotide sequence ID" value="XM_635666.1"/>
</dbReference>
<dbReference type="SMR" id="Q54UL8"/>
<dbReference type="FunCoup" id="Q54UL8">
    <property type="interactions" value="496"/>
</dbReference>
<dbReference type="STRING" id="44689.Q54UL8"/>
<dbReference type="PaxDb" id="44689-DDB0220499"/>
<dbReference type="EnsemblProtists" id="EAL66794">
    <property type="protein sequence ID" value="EAL66794"/>
    <property type="gene ID" value="DDB_G0280995"/>
</dbReference>
<dbReference type="GeneID" id="8622811"/>
<dbReference type="KEGG" id="ddi:DDB_G0280995"/>
<dbReference type="dictyBase" id="DDB_G0280995">
    <property type="gene designation" value="mps1"/>
</dbReference>
<dbReference type="VEuPathDB" id="AmoebaDB:DDB_G0280995"/>
<dbReference type="eggNOG" id="KOG0596">
    <property type="taxonomic scope" value="Eukaryota"/>
</dbReference>
<dbReference type="HOGENOM" id="CLU_303152_0_0_1"/>
<dbReference type="InParanoid" id="Q54UL8"/>
<dbReference type="OMA" id="NDQPMVI"/>
<dbReference type="PRO" id="PR:Q54UL8"/>
<dbReference type="Proteomes" id="UP000002195">
    <property type="component" value="Chromosome 3"/>
</dbReference>
<dbReference type="GO" id="GO:0005813">
    <property type="term" value="C:centrosome"/>
    <property type="evidence" value="ECO:0000304"/>
    <property type="project" value="dictyBase"/>
</dbReference>
<dbReference type="GO" id="GO:0000776">
    <property type="term" value="C:kinetochore"/>
    <property type="evidence" value="ECO:0000250"/>
    <property type="project" value="dictyBase"/>
</dbReference>
<dbReference type="GO" id="GO:0005634">
    <property type="term" value="C:nucleus"/>
    <property type="evidence" value="ECO:0000318"/>
    <property type="project" value="GO_Central"/>
</dbReference>
<dbReference type="GO" id="GO:0005524">
    <property type="term" value="F:ATP binding"/>
    <property type="evidence" value="ECO:0007669"/>
    <property type="project" value="UniProtKB-KW"/>
</dbReference>
<dbReference type="GO" id="GO:0106310">
    <property type="term" value="F:protein serine kinase activity"/>
    <property type="evidence" value="ECO:0007669"/>
    <property type="project" value="RHEA"/>
</dbReference>
<dbReference type="GO" id="GO:0004674">
    <property type="term" value="F:protein serine/threonine kinase activity"/>
    <property type="evidence" value="ECO:0000318"/>
    <property type="project" value="GO_Central"/>
</dbReference>
<dbReference type="GO" id="GO:0004712">
    <property type="term" value="F:protein serine/threonine/tyrosine kinase activity"/>
    <property type="evidence" value="ECO:0000250"/>
    <property type="project" value="dictyBase"/>
</dbReference>
<dbReference type="GO" id="GO:0007059">
    <property type="term" value="P:chromosome segregation"/>
    <property type="evidence" value="ECO:0000318"/>
    <property type="project" value="GO_Central"/>
</dbReference>
<dbReference type="GO" id="GO:0033316">
    <property type="term" value="P:meiotic spindle assembly checkpoint signaling"/>
    <property type="evidence" value="ECO:0000318"/>
    <property type="project" value="GO_Central"/>
</dbReference>
<dbReference type="GO" id="GO:0007094">
    <property type="term" value="P:mitotic spindle assembly checkpoint signaling"/>
    <property type="evidence" value="ECO:0000318"/>
    <property type="project" value="GO_Central"/>
</dbReference>
<dbReference type="GO" id="GO:0034501">
    <property type="term" value="P:protein localization to kinetochore"/>
    <property type="evidence" value="ECO:0000318"/>
    <property type="project" value="GO_Central"/>
</dbReference>
<dbReference type="CDD" id="cd14131">
    <property type="entry name" value="PKc_Mps1"/>
    <property type="match status" value="1"/>
</dbReference>
<dbReference type="FunFam" id="3.30.200.20:FF:000131">
    <property type="entry name" value="Dual specificity protein kinase TTK"/>
    <property type="match status" value="1"/>
</dbReference>
<dbReference type="FunFam" id="1.10.510.10:FF:000224">
    <property type="entry name" value="serine/threonine-protein kinase mph1 isoform X1"/>
    <property type="match status" value="1"/>
</dbReference>
<dbReference type="Gene3D" id="3.30.200.20">
    <property type="entry name" value="Phosphorylase Kinase, domain 1"/>
    <property type="match status" value="1"/>
</dbReference>
<dbReference type="Gene3D" id="1.10.510.10">
    <property type="entry name" value="Transferase(Phosphotransferase) domain 1"/>
    <property type="match status" value="1"/>
</dbReference>
<dbReference type="InterPro" id="IPR011009">
    <property type="entry name" value="Kinase-like_dom_sf"/>
</dbReference>
<dbReference type="InterPro" id="IPR027084">
    <property type="entry name" value="Mps1_cat"/>
</dbReference>
<dbReference type="InterPro" id="IPR000719">
    <property type="entry name" value="Prot_kinase_dom"/>
</dbReference>
<dbReference type="InterPro" id="IPR017441">
    <property type="entry name" value="Protein_kinase_ATP_BS"/>
</dbReference>
<dbReference type="PANTHER" id="PTHR22974:SF21">
    <property type="entry name" value="DUAL SPECIFICITY PROTEIN KINASE TTK"/>
    <property type="match status" value="1"/>
</dbReference>
<dbReference type="PANTHER" id="PTHR22974">
    <property type="entry name" value="MIXED LINEAGE PROTEIN KINASE"/>
    <property type="match status" value="1"/>
</dbReference>
<dbReference type="Pfam" id="PF00069">
    <property type="entry name" value="Pkinase"/>
    <property type="match status" value="1"/>
</dbReference>
<dbReference type="SMART" id="SM00220">
    <property type="entry name" value="S_TKc"/>
    <property type="match status" value="1"/>
</dbReference>
<dbReference type="SUPFAM" id="SSF56112">
    <property type="entry name" value="Protein kinase-like (PK-like)"/>
    <property type="match status" value="1"/>
</dbReference>
<dbReference type="PROSITE" id="PS00107">
    <property type="entry name" value="PROTEIN_KINASE_ATP"/>
    <property type="match status" value="1"/>
</dbReference>
<dbReference type="PROSITE" id="PS50011">
    <property type="entry name" value="PROTEIN_KINASE_DOM"/>
    <property type="match status" value="1"/>
</dbReference>
<organism>
    <name type="scientific">Dictyostelium discoideum</name>
    <name type="common">Social amoeba</name>
    <dbReference type="NCBI Taxonomy" id="44689"/>
    <lineage>
        <taxon>Eukaryota</taxon>
        <taxon>Amoebozoa</taxon>
        <taxon>Evosea</taxon>
        <taxon>Eumycetozoa</taxon>
        <taxon>Dictyostelia</taxon>
        <taxon>Dictyosteliales</taxon>
        <taxon>Dictyosteliaceae</taxon>
        <taxon>Dictyostelium</taxon>
    </lineage>
</organism>
<accession>Q54UL8</accession>
<gene>
    <name type="primary">mps1</name>
    <name type="synonym">ttkA</name>
    <name type="ORF">DDB_G0280995</name>
</gene>